<sequence>MMSYSLRVADLPAGDRPREKLLSQGARYLSSAELLAILLGTGQGAGKLSAVGLGQFILKQLGERTGDSTDAVSALRDITPEELMAIPGVGPAKATTILAAVELGKRVFQSRPGEQTIIDSPALAAAVLAADLMWQATERFAVLLLDVRHRLLGSHVITVGTATETLAHPREIFREAVRRNASRLIIAHNHPSGNLSPSQADLDLTKQILQAGQLMEIPVLDHLILGNGDYQSLREITPLWQQVPQGDGSA</sequence>
<evidence type="ECO:0000255" key="1">
    <source>
        <dbReference type="PROSITE-ProRule" id="PRU01182"/>
    </source>
</evidence>
<evidence type="ECO:0000305" key="2"/>
<organism>
    <name type="scientific">Thermosynechococcus vestitus (strain NIES-2133 / IAM M-273 / BP-1)</name>
    <dbReference type="NCBI Taxonomy" id="197221"/>
    <lineage>
        <taxon>Bacteria</taxon>
        <taxon>Bacillati</taxon>
        <taxon>Cyanobacteriota</taxon>
        <taxon>Cyanophyceae</taxon>
        <taxon>Acaryochloridales</taxon>
        <taxon>Thermosynechococcaceae</taxon>
        <taxon>Thermosynechococcus</taxon>
    </lineage>
</organism>
<feature type="chain" id="PRO_0000190745" description="UPF0758 protein tlr1707">
    <location>
        <begin position="1"/>
        <end position="250"/>
    </location>
</feature>
<feature type="domain" description="MPN" evidence="1">
    <location>
        <begin position="116"/>
        <end position="239"/>
    </location>
</feature>
<feature type="short sequence motif" description="JAMM motif" evidence="1">
    <location>
        <begin position="188"/>
        <end position="201"/>
    </location>
</feature>
<feature type="binding site" evidence="1">
    <location>
        <position position="188"/>
    </location>
    <ligand>
        <name>Zn(2+)</name>
        <dbReference type="ChEBI" id="CHEBI:29105"/>
        <note>catalytic</note>
    </ligand>
</feature>
<feature type="binding site" evidence="1">
    <location>
        <position position="190"/>
    </location>
    <ligand>
        <name>Zn(2+)</name>
        <dbReference type="ChEBI" id="CHEBI:29105"/>
        <note>catalytic</note>
    </ligand>
</feature>
<feature type="binding site" evidence="1">
    <location>
        <position position="201"/>
    </location>
    <ligand>
        <name>Zn(2+)</name>
        <dbReference type="ChEBI" id="CHEBI:29105"/>
        <note>catalytic</note>
    </ligand>
</feature>
<keyword id="KW-0378">Hydrolase</keyword>
<keyword id="KW-0479">Metal-binding</keyword>
<keyword id="KW-0482">Metalloprotease</keyword>
<keyword id="KW-0645">Protease</keyword>
<keyword id="KW-1185">Reference proteome</keyword>
<keyword id="KW-0862">Zinc</keyword>
<comment type="similarity">
    <text evidence="2">Belongs to the UPF0758 family.</text>
</comment>
<reference key="1">
    <citation type="journal article" date="2002" name="DNA Res.">
        <title>Complete genome structure of the thermophilic cyanobacterium Thermosynechococcus elongatus BP-1.</title>
        <authorList>
            <person name="Nakamura Y."/>
            <person name="Kaneko T."/>
            <person name="Sato S."/>
            <person name="Ikeuchi M."/>
            <person name="Katoh H."/>
            <person name="Sasamoto S."/>
            <person name="Watanabe A."/>
            <person name="Iriguchi M."/>
            <person name="Kawashima K."/>
            <person name="Kimura T."/>
            <person name="Kishida Y."/>
            <person name="Kiyokawa C."/>
            <person name="Kohara M."/>
            <person name="Matsumoto M."/>
            <person name="Matsuno A."/>
            <person name="Nakazaki N."/>
            <person name="Shimpo S."/>
            <person name="Sugimoto M."/>
            <person name="Takeuchi C."/>
            <person name="Yamada M."/>
            <person name="Tabata S."/>
        </authorList>
    </citation>
    <scope>NUCLEOTIDE SEQUENCE [LARGE SCALE GENOMIC DNA]</scope>
    <source>
        <strain>NIES-2133 / IAM M-273 / BP-1</strain>
    </source>
</reference>
<proteinExistence type="inferred from homology"/>
<protein>
    <recommendedName>
        <fullName>UPF0758 protein tlr1707</fullName>
    </recommendedName>
</protein>
<gene>
    <name type="ordered locus">tlr1707</name>
</gene>
<name>Y1707_THEVB</name>
<accession>Q8DI83</accession>
<dbReference type="EMBL" id="BA000039">
    <property type="protein sequence ID" value="BAC09259.1"/>
    <property type="molecule type" value="Genomic_DNA"/>
</dbReference>
<dbReference type="RefSeq" id="NP_682497.1">
    <property type="nucleotide sequence ID" value="NC_004113.1"/>
</dbReference>
<dbReference type="SMR" id="Q8DI83"/>
<dbReference type="STRING" id="197221.gene:10748311"/>
<dbReference type="EnsemblBacteria" id="BAC09259">
    <property type="protein sequence ID" value="BAC09259"/>
    <property type="gene ID" value="BAC09259"/>
</dbReference>
<dbReference type="KEGG" id="tel:tlr1707"/>
<dbReference type="PATRIC" id="fig|197221.4.peg.1788"/>
<dbReference type="eggNOG" id="COG2003">
    <property type="taxonomic scope" value="Bacteria"/>
</dbReference>
<dbReference type="Proteomes" id="UP000000440">
    <property type="component" value="Chromosome"/>
</dbReference>
<dbReference type="GO" id="GO:0003677">
    <property type="term" value="F:DNA binding"/>
    <property type="evidence" value="ECO:0007669"/>
    <property type="project" value="InterPro"/>
</dbReference>
<dbReference type="GO" id="GO:0046872">
    <property type="term" value="F:metal ion binding"/>
    <property type="evidence" value="ECO:0007669"/>
    <property type="project" value="UniProtKB-KW"/>
</dbReference>
<dbReference type="GO" id="GO:0008237">
    <property type="term" value="F:metallopeptidase activity"/>
    <property type="evidence" value="ECO:0007669"/>
    <property type="project" value="UniProtKB-KW"/>
</dbReference>
<dbReference type="GO" id="GO:0006281">
    <property type="term" value="P:DNA repair"/>
    <property type="evidence" value="ECO:0007669"/>
    <property type="project" value="InterPro"/>
</dbReference>
<dbReference type="GO" id="GO:0006508">
    <property type="term" value="P:proteolysis"/>
    <property type="evidence" value="ECO:0007669"/>
    <property type="project" value="UniProtKB-KW"/>
</dbReference>
<dbReference type="CDD" id="cd08071">
    <property type="entry name" value="MPN_DUF2466"/>
    <property type="match status" value="1"/>
</dbReference>
<dbReference type="Gene3D" id="3.40.140.10">
    <property type="entry name" value="Cytidine Deaminase, domain 2"/>
    <property type="match status" value="1"/>
</dbReference>
<dbReference type="InterPro" id="IPR003583">
    <property type="entry name" value="Hlx-hairpin-Hlx_DNA-bd_motif"/>
</dbReference>
<dbReference type="InterPro" id="IPR037518">
    <property type="entry name" value="MPN"/>
</dbReference>
<dbReference type="InterPro" id="IPR025657">
    <property type="entry name" value="RadC_JAB"/>
</dbReference>
<dbReference type="InterPro" id="IPR001405">
    <property type="entry name" value="UPF0758"/>
</dbReference>
<dbReference type="InterPro" id="IPR020891">
    <property type="entry name" value="UPF0758_CS"/>
</dbReference>
<dbReference type="InterPro" id="IPR046778">
    <property type="entry name" value="UPF0758_N"/>
</dbReference>
<dbReference type="NCBIfam" id="NF000642">
    <property type="entry name" value="PRK00024.1"/>
    <property type="match status" value="1"/>
</dbReference>
<dbReference type="NCBIfam" id="TIGR00608">
    <property type="entry name" value="radc"/>
    <property type="match status" value="1"/>
</dbReference>
<dbReference type="PANTHER" id="PTHR30471">
    <property type="entry name" value="DNA REPAIR PROTEIN RADC"/>
    <property type="match status" value="1"/>
</dbReference>
<dbReference type="PANTHER" id="PTHR30471:SF3">
    <property type="entry name" value="UPF0758 PROTEIN YEES-RELATED"/>
    <property type="match status" value="1"/>
</dbReference>
<dbReference type="Pfam" id="PF04002">
    <property type="entry name" value="RadC"/>
    <property type="match status" value="1"/>
</dbReference>
<dbReference type="Pfam" id="PF20582">
    <property type="entry name" value="UPF0758_N"/>
    <property type="match status" value="1"/>
</dbReference>
<dbReference type="SMART" id="SM00278">
    <property type="entry name" value="HhH1"/>
    <property type="match status" value="1"/>
</dbReference>
<dbReference type="SUPFAM" id="SSF102712">
    <property type="entry name" value="JAB1/MPN domain"/>
    <property type="match status" value="1"/>
</dbReference>
<dbReference type="PROSITE" id="PS50249">
    <property type="entry name" value="MPN"/>
    <property type="match status" value="1"/>
</dbReference>
<dbReference type="PROSITE" id="PS01302">
    <property type="entry name" value="UPF0758"/>
    <property type="match status" value="1"/>
</dbReference>